<name>EHD2_ORYSI</name>
<proteinExistence type="inferred from homology"/>
<evidence type="ECO:0000250" key="1">
    <source>
        <dbReference type="UniProtKB" id="B1B534"/>
    </source>
</evidence>
<evidence type="ECO:0000250" key="2">
    <source>
        <dbReference type="UniProtKB" id="Q700D2"/>
    </source>
</evidence>
<evidence type="ECO:0000255" key="3">
    <source>
        <dbReference type="PROSITE-ProRule" id="PRU00042"/>
    </source>
</evidence>
<evidence type="ECO:0000255" key="4">
    <source>
        <dbReference type="PROSITE-ProRule" id="PRU00768"/>
    </source>
</evidence>
<evidence type="ECO:0000256" key="5">
    <source>
        <dbReference type="SAM" id="MobiDB-lite"/>
    </source>
</evidence>
<evidence type="ECO:0000305" key="6"/>
<evidence type="ECO:0000312" key="7">
    <source>
        <dbReference type="EMBL" id="EEC66957.1"/>
    </source>
</evidence>
<comment type="function">
    <text evidence="1">Transcription activator that acts as a flowering master switch in both long and short days, independently of the circadian clock (By similarity). Promotes flowering upstream of HD1 by up-regulating FTL1, FTL4, FTL5, FTL6, EHD1, HD3A and RFT1 (By similarity). Seems to repress FTL11 expression (By similarity). May recognize the consensus motif 5'-TTTGTCGTAAT-3' in target gene promoters (By similarity).</text>
</comment>
<comment type="subcellular location">
    <subcellularLocation>
        <location evidence="4">Nucleus</location>
    </subcellularLocation>
</comment>
<gene>
    <name evidence="6" type="primary">Ehd2</name>
    <name evidence="6" type="synonym">RID1</name>
    <name evidence="7" type="ORF">OsI_33602</name>
</gene>
<feature type="chain" id="PRO_0000447326" description="Protein EARLY HEADING DATE 2">
    <location>
        <begin position="1"/>
        <end position="476"/>
    </location>
</feature>
<feature type="zinc finger region" description="C2H2-type 1" evidence="3">
    <location>
        <begin position="106"/>
        <end position="128"/>
    </location>
</feature>
<feature type="zinc finger region" description="C2H2-type 2" evidence="2">
    <location>
        <begin position="156"/>
        <end position="186"/>
    </location>
</feature>
<feature type="zinc finger region" description="C2H2-type 2; degenerate" evidence="3">
    <location>
        <begin position="191"/>
        <end position="214"/>
    </location>
</feature>
<feature type="zinc finger region" description="CCHC-type 2; atypical" evidence="2">
    <location>
        <begin position="218"/>
        <end position="241"/>
    </location>
</feature>
<feature type="region of interest" description="Disordered" evidence="5">
    <location>
        <begin position="1"/>
        <end position="27"/>
    </location>
</feature>
<feature type="region of interest" description="SHR-binding" evidence="2">
    <location>
        <begin position="228"/>
        <end position="240"/>
    </location>
</feature>
<feature type="short sequence motif" description="Nuclear localization signal 1" evidence="4">
    <location>
        <begin position="124"/>
        <end position="131"/>
    </location>
</feature>
<feature type="short sequence motif" description="Nuclear localization signal 2" evidence="4">
    <location>
        <begin position="178"/>
        <end position="185"/>
    </location>
</feature>
<feature type="compositionally biased region" description="Polar residues" evidence="5">
    <location>
        <begin position="1"/>
        <end position="13"/>
    </location>
</feature>
<feature type="binding site" evidence="2">
    <location>
        <position position="193"/>
    </location>
    <ligand>
        <name>Zn(2+)</name>
        <dbReference type="ChEBI" id="CHEBI:29105"/>
        <label>1</label>
    </ligand>
</feature>
<feature type="binding site" evidence="2">
    <location>
        <position position="196"/>
    </location>
    <ligand>
        <name>Zn(2+)</name>
        <dbReference type="ChEBI" id="CHEBI:29105"/>
        <label>1</label>
    </ligand>
</feature>
<feature type="binding site" evidence="2">
    <location>
        <position position="209"/>
    </location>
    <ligand>
        <name>Zn(2+)</name>
        <dbReference type="ChEBI" id="CHEBI:29105"/>
        <label>1</label>
    </ligand>
</feature>
<feature type="binding site" evidence="2">
    <location>
        <position position="213"/>
    </location>
    <ligand>
        <name>Zn(2+)</name>
        <dbReference type="ChEBI" id="CHEBI:29105"/>
        <label>1</label>
    </ligand>
</feature>
<feature type="binding site" evidence="2">
    <location>
        <position position="220"/>
    </location>
    <ligand>
        <name>Zn(2+)</name>
        <dbReference type="ChEBI" id="CHEBI:29105"/>
        <label>2</label>
    </ligand>
</feature>
<feature type="binding site" evidence="2">
    <location>
        <position position="222"/>
    </location>
    <ligand>
        <name>Zn(2+)</name>
        <dbReference type="ChEBI" id="CHEBI:29105"/>
        <label>2</label>
    </ligand>
</feature>
<feature type="binding site" evidence="2">
    <location>
        <position position="235"/>
    </location>
    <ligand>
        <name>Zn(2+)</name>
        <dbReference type="ChEBI" id="CHEBI:29105"/>
        <label>2</label>
    </ligand>
</feature>
<feature type="binding site" evidence="2">
    <location>
        <position position="239"/>
    </location>
    <ligand>
        <name>Zn(2+)</name>
        <dbReference type="ChEBI" id="CHEBI:29105"/>
        <label>2</label>
    </ligand>
</feature>
<reference key="1">
    <citation type="journal article" date="2005" name="PLoS Biol.">
        <title>The genomes of Oryza sativa: a history of duplications.</title>
        <authorList>
            <person name="Yu J."/>
            <person name="Wang J."/>
            <person name="Lin W."/>
            <person name="Li S."/>
            <person name="Li H."/>
            <person name="Zhou J."/>
            <person name="Ni P."/>
            <person name="Dong W."/>
            <person name="Hu S."/>
            <person name="Zeng C."/>
            <person name="Zhang J."/>
            <person name="Zhang Y."/>
            <person name="Li R."/>
            <person name="Xu Z."/>
            <person name="Li S."/>
            <person name="Li X."/>
            <person name="Zheng H."/>
            <person name="Cong L."/>
            <person name="Lin L."/>
            <person name="Yin J."/>
            <person name="Geng J."/>
            <person name="Li G."/>
            <person name="Shi J."/>
            <person name="Liu J."/>
            <person name="Lv H."/>
            <person name="Li J."/>
            <person name="Wang J."/>
            <person name="Deng Y."/>
            <person name="Ran L."/>
            <person name="Shi X."/>
            <person name="Wang X."/>
            <person name="Wu Q."/>
            <person name="Li C."/>
            <person name="Ren X."/>
            <person name="Wang J."/>
            <person name="Wang X."/>
            <person name="Li D."/>
            <person name="Liu D."/>
            <person name="Zhang X."/>
            <person name="Ji Z."/>
            <person name="Zhao W."/>
            <person name="Sun Y."/>
            <person name="Zhang Z."/>
            <person name="Bao J."/>
            <person name="Han Y."/>
            <person name="Dong L."/>
            <person name="Ji J."/>
            <person name="Chen P."/>
            <person name="Wu S."/>
            <person name="Liu J."/>
            <person name="Xiao Y."/>
            <person name="Bu D."/>
            <person name="Tan J."/>
            <person name="Yang L."/>
            <person name="Ye C."/>
            <person name="Zhang J."/>
            <person name="Xu J."/>
            <person name="Zhou Y."/>
            <person name="Yu Y."/>
            <person name="Zhang B."/>
            <person name="Zhuang S."/>
            <person name="Wei H."/>
            <person name="Liu B."/>
            <person name="Lei M."/>
            <person name="Yu H."/>
            <person name="Li Y."/>
            <person name="Xu H."/>
            <person name="Wei S."/>
            <person name="He X."/>
            <person name="Fang L."/>
            <person name="Zhang Z."/>
            <person name="Zhang Y."/>
            <person name="Huang X."/>
            <person name="Su Z."/>
            <person name="Tong W."/>
            <person name="Li J."/>
            <person name="Tong Z."/>
            <person name="Li S."/>
            <person name="Ye J."/>
            <person name="Wang L."/>
            <person name="Fang L."/>
            <person name="Lei T."/>
            <person name="Chen C.-S."/>
            <person name="Chen H.-C."/>
            <person name="Xu Z."/>
            <person name="Li H."/>
            <person name="Huang H."/>
            <person name="Zhang F."/>
            <person name="Xu H."/>
            <person name="Li N."/>
            <person name="Zhao C."/>
            <person name="Li S."/>
            <person name="Dong L."/>
            <person name="Huang Y."/>
            <person name="Li L."/>
            <person name="Xi Y."/>
            <person name="Qi Q."/>
            <person name="Li W."/>
            <person name="Zhang B."/>
            <person name="Hu W."/>
            <person name="Zhang Y."/>
            <person name="Tian X."/>
            <person name="Jiao Y."/>
            <person name="Liang X."/>
            <person name="Jin J."/>
            <person name="Gao L."/>
            <person name="Zheng W."/>
            <person name="Hao B."/>
            <person name="Liu S.-M."/>
            <person name="Wang W."/>
            <person name="Yuan L."/>
            <person name="Cao M."/>
            <person name="McDermott J."/>
            <person name="Samudrala R."/>
            <person name="Wang J."/>
            <person name="Wong G.K.-S."/>
            <person name="Yang H."/>
        </authorList>
    </citation>
    <scope>NUCLEOTIDE SEQUENCE [LARGE SCALE GENOMIC DNA]</scope>
    <source>
        <strain>cv. 93-11</strain>
    </source>
</reference>
<organism>
    <name type="scientific">Oryza sativa subsp. indica</name>
    <name type="common">Rice</name>
    <dbReference type="NCBI Taxonomy" id="39946"/>
    <lineage>
        <taxon>Eukaryota</taxon>
        <taxon>Viridiplantae</taxon>
        <taxon>Streptophyta</taxon>
        <taxon>Embryophyta</taxon>
        <taxon>Tracheophyta</taxon>
        <taxon>Spermatophyta</taxon>
        <taxon>Magnoliopsida</taxon>
        <taxon>Liliopsida</taxon>
        <taxon>Poales</taxon>
        <taxon>Poaceae</taxon>
        <taxon>BOP clade</taxon>
        <taxon>Oryzoideae</taxon>
        <taxon>Oryzeae</taxon>
        <taxon>Oryzinae</taxon>
        <taxon>Oryza</taxon>
        <taxon>Oryza sativa</taxon>
    </lineage>
</organism>
<keyword id="KW-0010">Activator</keyword>
<keyword id="KW-0479">Metal-binding</keyword>
<keyword id="KW-0539">Nucleus</keyword>
<keyword id="KW-1185">Reference proteome</keyword>
<keyword id="KW-0677">Repeat</keyword>
<keyword id="KW-0804">Transcription</keyword>
<keyword id="KW-0805">Transcription regulation</keyword>
<keyword id="KW-0862">Zinc</keyword>
<keyword id="KW-0863">Zinc-finger</keyword>
<sequence length="476" mass="50787">MLLSDLSSDQEATGSNSHGGGGGGDRMVVGSHGAAHVVLSNLFLPPAAAAAATMLLPAAPVMVRPAAMAAAQEPRAKKKRSLPGNPDPEAEVIALSPRALVATNRFVCEVCNKGFQRDQNLQLHRRGHNLPWKLRHRAAAVSAVTTAAPAPRKRVYVCPEPTCVHHDPARALGDLTGIKKHFSRKHGEKRWRCERCGKRYAVHSDWKAHVKNCGTREYRCDCGILFSRKDSLLTHRAFCDALAEESARLLAAANNSSSITTTTCNNSNISSNNNNNNINSISNSNNLLITSSSSSPPLFLPFSTTPAENPNPNQLLFLQQHQAAHHQLLLPQFQQPPSSPPAYFDHLAFGGGGGVITSSSCNDDNSSIAGDVMVAAGGDSVSFGLTSEGSVTMHAGDVGRRRLTRDFLGVDHDAGEVDELELDELPADLSTTAAACQGCNFAAATTVACCATDFTTGSRQYLGRLPPVNETWSHNF</sequence>
<dbReference type="EMBL" id="CM000135">
    <property type="protein sequence ID" value="EEC66957.1"/>
    <property type="molecule type" value="Genomic_DNA"/>
</dbReference>
<dbReference type="STRING" id="39946.B8BGV5"/>
<dbReference type="EnsemblPlants" id="BGIOSGA031911-TA">
    <property type="protein sequence ID" value="BGIOSGA031911-PA"/>
    <property type="gene ID" value="BGIOSGA031911"/>
</dbReference>
<dbReference type="Gramene" id="BGIOSGA031911-TA">
    <property type="protein sequence ID" value="BGIOSGA031911-PA"/>
    <property type="gene ID" value="BGIOSGA031911"/>
</dbReference>
<dbReference type="HOGENOM" id="CLU_014578_4_2_1"/>
<dbReference type="OMA" id="ATTVACC"/>
<dbReference type="Proteomes" id="UP000007015">
    <property type="component" value="Chromosome 10"/>
</dbReference>
<dbReference type="GO" id="GO:0005634">
    <property type="term" value="C:nucleus"/>
    <property type="evidence" value="ECO:0007669"/>
    <property type="project" value="UniProtKB-SubCell"/>
</dbReference>
<dbReference type="GO" id="GO:0003700">
    <property type="term" value="F:DNA-binding transcription factor activity"/>
    <property type="evidence" value="ECO:0007669"/>
    <property type="project" value="TreeGrafter"/>
</dbReference>
<dbReference type="GO" id="GO:0043565">
    <property type="term" value="F:sequence-specific DNA binding"/>
    <property type="evidence" value="ECO:0007669"/>
    <property type="project" value="EnsemblPlants"/>
</dbReference>
<dbReference type="GO" id="GO:0008270">
    <property type="term" value="F:zinc ion binding"/>
    <property type="evidence" value="ECO:0007669"/>
    <property type="project" value="UniProtKB-KW"/>
</dbReference>
<dbReference type="GO" id="GO:0048574">
    <property type="term" value="P:long-day photoperiodism, flowering"/>
    <property type="evidence" value="ECO:0007669"/>
    <property type="project" value="EnsemblPlants"/>
</dbReference>
<dbReference type="GO" id="GO:0045893">
    <property type="term" value="P:positive regulation of DNA-templated transcription"/>
    <property type="evidence" value="ECO:0007669"/>
    <property type="project" value="EnsemblPlants"/>
</dbReference>
<dbReference type="GO" id="GO:0048510">
    <property type="term" value="P:regulation of timing of transition from vegetative to reproductive phase"/>
    <property type="evidence" value="ECO:0007669"/>
    <property type="project" value="EnsemblPlants"/>
</dbReference>
<dbReference type="GO" id="GO:0048575">
    <property type="term" value="P:short-day photoperiodism, flowering"/>
    <property type="evidence" value="ECO:0007669"/>
    <property type="project" value="EnsemblPlants"/>
</dbReference>
<dbReference type="FunFam" id="3.30.160.60:FF:000554">
    <property type="entry name" value="protein indeterminate-domain 12-like"/>
    <property type="match status" value="1"/>
</dbReference>
<dbReference type="FunFam" id="3.30.160.60:FF:000131">
    <property type="entry name" value="protein indeterminate-domain 5, chloroplastic-like"/>
    <property type="match status" value="1"/>
</dbReference>
<dbReference type="Gene3D" id="3.30.160.60">
    <property type="entry name" value="Classic Zinc Finger"/>
    <property type="match status" value="1"/>
</dbReference>
<dbReference type="InterPro" id="IPR055187">
    <property type="entry name" value="C2CH-3rd_BIRD-IDD"/>
</dbReference>
<dbReference type="InterPro" id="IPR055185">
    <property type="entry name" value="C2CH-4th_BIRD-IDD"/>
</dbReference>
<dbReference type="InterPro" id="IPR055186">
    <property type="entry name" value="C2H2-2nd_BIRD-IDD"/>
</dbReference>
<dbReference type="InterPro" id="IPR031140">
    <property type="entry name" value="IDD1-16"/>
</dbReference>
<dbReference type="InterPro" id="IPR036236">
    <property type="entry name" value="Znf_C2H2_sf"/>
</dbReference>
<dbReference type="InterPro" id="IPR013087">
    <property type="entry name" value="Znf_C2H2_type"/>
</dbReference>
<dbReference type="PANTHER" id="PTHR10593:SF136">
    <property type="entry name" value="PROTEIN INDETERMINATE-DOMAIN 12"/>
    <property type="match status" value="1"/>
</dbReference>
<dbReference type="PANTHER" id="PTHR10593">
    <property type="entry name" value="SERINE/THREONINE-PROTEIN KINASE RIO"/>
    <property type="match status" value="1"/>
</dbReference>
<dbReference type="Pfam" id="PF22995">
    <property type="entry name" value="C2CH-3rd_BIRD-IDD"/>
    <property type="match status" value="1"/>
</dbReference>
<dbReference type="Pfam" id="PF22992">
    <property type="entry name" value="C2CH-4th_BIRD-IDD"/>
    <property type="match status" value="1"/>
</dbReference>
<dbReference type="Pfam" id="PF22996">
    <property type="entry name" value="C2H2-2nd_BIRD-IDD"/>
    <property type="match status" value="1"/>
</dbReference>
<dbReference type="Pfam" id="PF12874">
    <property type="entry name" value="zf-met"/>
    <property type="match status" value="1"/>
</dbReference>
<dbReference type="SMART" id="SM00355">
    <property type="entry name" value="ZnF_C2H2"/>
    <property type="match status" value="3"/>
</dbReference>
<dbReference type="SUPFAM" id="SSF57667">
    <property type="entry name" value="beta-beta-alpha zinc fingers"/>
    <property type="match status" value="1"/>
</dbReference>
<dbReference type="PROSITE" id="PS00028">
    <property type="entry name" value="ZINC_FINGER_C2H2_1"/>
    <property type="match status" value="1"/>
</dbReference>
<dbReference type="PROSITE" id="PS50157">
    <property type="entry name" value="ZINC_FINGER_C2H2_2"/>
    <property type="match status" value="1"/>
</dbReference>
<protein>
    <recommendedName>
        <fullName evidence="6">Protein EARLY HEADING DATE 2</fullName>
    </recommendedName>
    <alternativeName>
        <fullName evidence="6">Protein RICE INDETERMINATE 1</fullName>
    </alternativeName>
</protein>
<accession>B8BGV5</accession>